<evidence type="ECO:0000255" key="1">
    <source>
        <dbReference type="HAMAP-Rule" id="MF_03114"/>
    </source>
</evidence>
<evidence type="ECO:0000256" key="2">
    <source>
        <dbReference type="SAM" id="MobiDB-lite"/>
    </source>
</evidence>
<evidence type="ECO:0000305" key="3"/>
<reference key="1">
    <citation type="journal article" date="2009" name="Genome Res.">
        <title>Comparative genomics of protoploid Saccharomycetaceae.</title>
        <authorList>
            <consortium name="The Genolevures Consortium"/>
            <person name="Souciet J.-L."/>
            <person name="Dujon B."/>
            <person name="Gaillardin C."/>
            <person name="Johnston M."/>
            <person name="Baret P.V."/>
            <person name="Cliften P."/>
            <person name="Sherman D.J."/>
            <person name="Weissenbach J."/>
            <person name="Westhof E."/>
            <person name="Wincker P."/>
            <person name="Jubin C."/>
            <person name="Poulain J."/>
            <person name="Barbe V."/>
            <person name="Segurens B."/>
            <person name="Artiguenave F."/>
            <person name="Anthouard V."/>
            <person name="Vacherie B."/>
            <person name="Val M.-E."/>
            <person name="Fulton R.S."/>
            <person name="Minx P."/>
            <person name="Wilson R."/>
            <person name="Durrens P."/>
            <person name="Jean G."/>
            <person name="Marck C."/>
            <person name="Martin T."/>
            <person name="Nikolski M."/>
            <person name="Rolland T."/>
            <person name="Seret M.-L."/>
            <person name="Casaregola S."/>
            <person name="Despons L."/>
            <person name="Fairhead C."/>
            <person name="Fischer G."/>
            <person name="Lafontaine I."/>
            <person name="Leh V."/>
            <person name="Lemaire M."/>
            <person name="de Montigny J."/>
            <person name="Neuveglise C."/>
            <person name="Thierry A."/>
            <person name="Blanc-Lenfle I."/>
            <person name="Bleykasten C."/>
            <person name="Diffels J."/>
            <person name="Fritsch E."/>
            <person name="Frangeul L."/>
            <person name="Goeffon A."/>
            <person name="Jauniaux N."/>
            <person name="Kachouri-Lafond R."/>
            <person name="Payen C."/>
            <person name="Potier S."/>
            <person name="Pribylova L."/>
            <person name="Ozanne C."/>
            <person name="Richard G.-F."/>
            <person name="Sacerdot C."/>
            <person name="Straub M.-L."/>
            <person name="Talla E."/>
        </authorList>
    </citation>
    <scope>NUCLEOTIDE SEQUENCE [LARGE SCALE GENOMIC DNA]</scope>
    <source>
        <strain>ATCC 56472 / CBS 6340 / NRRL Y-8284</strain>
    </source>
</reference>
<name>GET2_LACTC</name>
<gene>
    <name evidence="1" type="primary">GET2</name>
    <name type="ordered locus">KLTH0A05126g</name>
</gene>
<protein>
    <recommendedName>
        <fullName evidence="1">Golgi to ER traffic protein 2</fullName>
    </recommendedName>
</protein>
<accession>C5DBT1</accession>
<sequence>MSEISDAEKRRILREKRQQKFNKGGASSRLAKITGQTENSFLSTESPLDSRESTYPAQETKAPAGNEDSTKQMDELLAKATSKTTSKASSPPGSAEQQNGNPELDLFAQIAKLQQNANNETVSTDPSGTPDIFAQLMASMQQDEAKGGSPGATAQQPIDPAIVEAHNIAVNKLKSYTILVKWLFFLLPYLYYITHSARDPFQHNAVNYVLDRSNFFTVFTTFEIVALSVYYQLLMSAEKSHNVNTLDNNSKILKLVSMVPPGLVPIPNLRGKVAQALQYWDVVSMYLTDLCFAIVLAGLFQYYHSM</sequence>
<dbReference type="EMBL" id="CU928165">
    <property type="protein sequence ID" value="CAR21238.1"/>
    <property type="status" value="ALT_INIT"/>
    <property type="molecule type" value="Genomic_DNA"/>
</dbReference>
<dbReference type="RefSeq" id="XP_002551680.1">
    <property type="nucleotide sequence ID" value="XM_002551634.1"/>
</dbReference>
<dbReference type="SMR" id="C5DBT1"/>
<dbReference type="FunCoup" id="C5DBT1">
    <property type="interactions" value="69"/>
</dbReference>
<dbReference type="STRING" id="559295.C5DBT1"/>
<dbReference type="GeneID" id="8290484"/>
<dbReference type="KEGG" id="lth:KLTH0A05126g"/>
<dbReference type="eggNOG" id="ENOG502QW0H">
    <property type="taxonomic scope" value="Eukaryota"/>
</dbReference>
<dbReference type="HOGENOM" id="CLU_066477_0_0_1"/>
<dbReference type="InParanoid" id="C5DBT1"/>
<dbReference type="OrthoDB" id="4097053at2759"/>
<dbReference type="Proteomes" id="UP000002036">
    <property type="component" value="Chromosome A"/>
</dbReference>
<dbReference type="GO" id="GO:0005789">
    <property type="term" value="C:endoplasmic reticulum membrane"/>
    <property type="evidence" value="ECO:0007669"/>
    <property type="project" value="UniProtKB-SubCell"/>
</dbReference>
<dbReference type="GO" id="GO:0043529">
    <property type="term" value="C:GET complex"/>
    <property type="evidence" value="ECO:0007669"/>
    <property type="project" value="UniProtKB-UniRule"/>
</dbReference>
<dbReference type="GO" id="GO:0000139">
    <property type="term" value="C:Golgi membrane"/>
    <property type="evidence" value="ECO:0007669"/>
    <property type="project" value="UniProtKB-SubCell"/>
</dbReference>
<dbReference type="GO" id="GO:0045048">
    <property type="term" value="P:protein insertion into ER membrane"/>
    <property type="evidence" value="ECO:0007669"/>
    <property type="project" value="UniProtKB-UniRule"/>
</dbReference>
<dbReference type="GO" id="GO:0006890">
    <property type="term" value="P:retrograde vesicle-mediated transport, Golgi to endoplasmic reticulum"/>
    <property type="evidence" value="ECO:0007669"/>
    <property type="project" value="TreeGrafter"/>
</dbReference>
<dbReference type="HAMAP" id="MF_03114">
    <property type="entry name" value="Get2"/>
    <property type="match status" value="1"/>
</dbReference>
<dbReference type="InterPro" id="IPR014802">
    <property type="entry name" value="GET2"/>
</dbReference>
<dbReference type="InterPro" id="IPR028143">
    <property type="entry name" value="Get2/sif1"/>
</dbReference>
<dbReference type="PANTHER" id="PTHR28263">
    <property type="entry name" value="GOLGI TO ER TRAFFIC PROTEIN 2"/>
    <property type="match status" value="1"/>
</dbReference>
<dbReference type="PANTHER" id="PTHR28263:SF1">
    <property type="entry name" value="GOLGI TO ER TRAFFIC PROTEIN 2"/>
    <property type="match status" value="1"/>
</dbReference>
<dbReference type="Pfam" id="PF08690">
    <property type="entry name" value="GET2"/>
    <property type="match status" value="1"/>
</dbReference>
<proteinExistence type="inferred from homology"/>
<organism>
    <name type="scientific">Lachancea thermotolerans (strain ATCC 56472 / CBS 6340 / NRRL Y-8284)</name>
    <name type="common">Yeast</name>
    <name type="synonym">Kluyveromyces thermotolerans</name>
    <dbReference type="NCBI Taxonomy" id="559295"/>
    <lineage>
        <taxon>Eukaryota</taxon>
        <taxon>Fungi</taxon>
        <taxon>Dikarya</taxon>
        <taxon>Ascomycota</taxon>
        <taxon>Saccharomycotina</taxon>
        <taxon>Saccharomycetes</taxon>
        <taxon>Saccharomycetales</taxon>
        <taxon>Saccharomycetaceae</taxon>
        <taxon>Lachancea</taxon>
    </lineage>
</organism>
<comment type="function">
    <text evidence="1">Required for the post-translational delivery of tail-anchored (TA) proteins to the endoplasmic reticulum. Together with GET1, acts as a membrane receptor for soluble GET3, which recognizes and selectively binds the transmembrane domain of TA proteins in the cytosol. The GET complex cooperates with the HDEL receptor ERD2 to mediate the ATP-dependent retrieval of resident ER proteins that contain a C-terminal H-D-E-L retention signal from the Golgi to the ER.</text>
</comment>
<comment type="subunit">
    <text evidence="1">Component of the Golgi to ER traffic (GET) complex, which is composed of GET1, GET2 and GET3. Within the complex, GET1 and GET2 form a heterotetramer which is stabilized by phosphatidylinositol binding and which binds to the GET3 homodimer.</text>
</comment>
<comment type="subcellular location">
    <subcellularLocation>
        <location evidence="1">Endoplasmic reticulum membrane</location>
        <topology evidence="1">Multi-pass membrane protein</topology>
    </subcellularLocation>
    <subcellularLocation>
        <location evidence="1">Golgi apparatus membrane</location>
        <topology evidence="1">Multi-pass membrane protein</topology>
    </subcellularLocation>
</comment>
<comment type="similarity">
    <text evidence="1">Belongs to the GET2 family.</text>
</comment>
<comment type="sequence caution" evidence="3">
    <conflict type="erroneous initiation">
        <sequence resource="EMBL-CDS" id="CAR21238"/>
    </conflict>
</comment>
<feature type="chain" id="PRO_0000388633" description="Golgi to ER traffic protein 2">
    <location>
        <begin position="1"/>
        <end position="306"/>
    </location>
</feature>
<feature type="topological domain" description="Cytoplasmic" evidence="1">
    <location>
        <begin position="1"/>
        <end position="172"/>
    </location>
</feature>
<feature type="transmembrane region" description="Helical" evidence="1">
    <location>
        <begin position="173"/>
        <end position="193"/>
    </location>
</feature>
<feature type="topological domain" description="Lumenal" evidence="1">
    <location>
        <begin position="194"/>
        <end position="214"/>
    </location>
</feature>
<feature type="transmembrane region" description="Helical" evidence="1">
    <location>
        <begin position="215"/>
        <end position="234"/>
    </location>
</feature>
<feature type="topological domain" description="Cytoplasmic" evidence="1">
    <location>
        <begin position="235"/>
        <end position="281"/>
    </location>
</feature>
<feature type="transmembrane region" description="Helical" evidence="1">
    <location>
        <begin position="282"/>
        <end position="302"/>
    </location>
</feature>
<feature type="topological domain" description="Lumenal" evidence="1">
    <location>
        <begin position="303"/>
        <end position="306"/>
    </location>
</feature>
<feature type="region of interest" description="Disordered" evidence="2">
    <location>
        <begin position="1"/>
        <end position="100"/>
    </location>
</feature>
<feature type="compositionally biased region" description="Basic and acidic residues" evidence="2">
    <location>
        <begin position="1"/>
        <end position="18"/>
    </location>
</feature>
<feature type="compositionally biased region" description="Polar residues" evidence="2">
    <location>
        <begin position="34"/>
        <end position="57"/>
    </location>
</feature>
<feature type="compositionally biased region" description="Basic and acidic residues" evidence="2">
    <location>
        <begin position="68"/>
        <end position="77"/>
    </location>
</feature>
<feature type="compositionally biased region" description="Low complexity" evidence="2">
    <location>
        <begin position="78"/>
        <end position="90"/>
    </location>
</feature>
<feature type="compositionally biased region" description="Polar residues" evidence="2">
    <location>
        <begin position="91"/>
        <end position="100"/>
    </location>
</feature>
<keyword id="KW-0256">Endoplasmic reticulum</keyword>
<keyword id="KW-0931">ER-Golgi transport</keyword>
<keyword id="KW-0333">Golgi apparatus</keyword>
<keyword id="KW-0472">Membrane</keyword>
<keyword id="KW-1185">Reference proteome</keyword>
<keyword id="KW-0812">Transmembrane</keyword>
<keyword id="KW-1133">Transmembrane helix</keyword>
<keyword id="KW-0813">Transport</keyword>